<proteinExistence type="inferred from homology"/>
<comment type="function">
    <text evidence="2 4">NMDA receptor subtype of glutamate-gated ion channels with high calcium permeability and voltage-dependent sensitivity to magnesium. Mediated by glycine. This protein plays a key role in synaptic plasticity, synaptogenesis, excitotoxicity, memory acquisition and learning. It mediates neuronal functions in glutamate neurotransmission. Is involved in the cell surface targeting of NMDA receptors. Plays a role in associative learning and in long-term memory consolidation (By similarity).</text>
</comment>
<comment type="subunit">
    <text evidence="1">Forms a heteromeric NMDA channel with Nmdar2.</text>
</comment>
<comment type="subcellular location">
    <subcellularLocation>
        <location evidence="4">Cell membrane</location>
        <topology evidence="4">Multi-pass membrane protein</topology>
    </subcellularLocation>
    <subcellularLocation>
        <location evidence="4">Postsynaptic cell membrane</location>
    </subcellularLocation>
    <subcellularLocation>
        <location evidence="4">Postsynaptic density</location>
    </subcellularLocation>
</comment>
<comment type="similarity">
    <text evidence="7">Belongs to the glutamate-gated ion channel (TC 1.A.10.1) family.</text>
</comment>
<accession>B3LZ39</accession>
<keyword id="KW-0106">Calcium</keyword>
<keyword id="KW-1003">Cell membrane</keyword>
<keyword id="KW-1015">Disulfide bond</keyword>
<keyword id="KW-0325">Glycoprotein</keyword>
<keyword id="KW-0407">Ion channel</keyword>
<keyword id="KW-0406">Ion transport</keyword>
<keyword id="KW-1071">Ligand-gated ion channel</keyword>
<keyword id="KW-0460">Magnesium</keyword>
<keyword id="KW-0472">Membrane</keyword>
<keyword id="KW-0597">Phosphoprotein</keyword>
<keyword id="KW-0628">Postsynaptic cell membrane</keyword>
<keyword id="KW-0675">Receptor</keyword>
<keyword id="KW-1185">Reference proteome</keyword>
<keyword id="KW-0732">Signal</keyword>
<keyword id="KW-0770">Synapse</keyword>
<keyword id="KW-0812">Transmembrane</keyword>
<keyword id="KW-1133">Transmembrane helix</keyword>
<keyword id="KW-0813">Transport</keyword>
<evidence type="ECO:0000250" key="1"/>
<evidence type="ECO:0000250" key="2">
    <source>
        <dbReference type="UniProtKB" id="P35439"/>
    </source>
</evidence>
<evidence type="ECO:0000250" key="3">
    <source>
        <dbReference type="UniProtKB" id="Q05586"/>
    </source>
</evidence>
<evidence type="ECO:0000250" key="4">
    <source>
        <dbReference type="UniProtKB" id="Q24418"/>
    </source>
</evidence>
<evidence type="ECO:0000255" key="5"/>
<evidence type="ECO:0000256" key="6">
    <source>
        <dbReference type="SAM" id="MobiDB-lite"/>
    </source>
</evidence>
<evidence type="ECO:0000305" key="7"/>
<evidence type="ECO:0000312" key="8">
    <source>
        <dbReference type="EMBL" id="EDV41913.1"/>
    </source>
</evidence>
<name>NMDA1_DROAN</name>
<gene>
    <name evidence="4" type="primary">Nmdar1</name>
    <name type="ORF">GF17704</name>
</gene>
<sequence length="994" mass="112024">MAADGFVYRWLLFGTTIVLLAEAAQRHTASDNPSTYNIGGVLSNSDSEEHFSTTIKHLNFDQQYVPRKVTYYDKTIRMDKNPIKTVFNVCDKLIENRVYAVVVSHEQTSGDLSPAAVSYTSGFYSIPVIGISSRDAAFSDKNIHVSFLRTVPPYYHQADVWLEMLSHFSYTKVIIIHSSDTDGRAILGRFQTTSQTYYDDVDVRATVELIVEFEPKLESFTEHLIDMKTAQSRVYLMYASTEDAQVIFRDAGEYNMTGEGHVWIVTEQALFANNTPDGVLGLQLEHAHSDKGHIRDSVYVLASAIKEMISNETIGEAPKDCGDSAVNWESGKRLFQYLKSRNITGETGQVAFDDNGDRIYAGYDVINIREQQKKHVVGKFSYDNERAKMRMRINDSEIIWPGKQRRKPEGIMIPTHLKVLTIEEKPFVYVRRMGDDEFRCEPDERPCPLFNASDATANEFCCRGYCIDLLIELSKRINFTYDLALSPDGQFGHYILRNSTGAMTLRKEWTGLIGELVNERADMIVAPLTINPERAEYIEFSKPFKYQGITILEKKPSRSSTLVSFLQPFSNTLWILVMVSVHVVALVLYLLDRFSPFGRFKLSHSDSNEEKALNLSSAVWFAWGVLLNSGIGEGTPRSFSARVLGMVWAGFAMIIVASYTANLAAFLVLERPKTKLSGINDARLRNTMENLTCATVKGSSVDMYFRRQVELSNMYRTMEANNYATAEQAIQDVKKGKLMAFIWDSSRLEYEASKDCELVTAGELFGRSGYGIGLQKGSPWTDAVTLAILEFHESGFMEKLDKQWIFHGHVQQNCELFEKTPNTLGLKNMAGVFILVGVGIAGGVGLIIIEVIYKKHQVKKQKRLDIARHAADKWRGTIEKRKTIRASLAMQRQYNVGLNATHAPGTISLAVDKRRYPRLGQRLGPERAWPGDAADVLRIRRPYELGKPGQSPKVMGANQPTMPMPMLGKTRPQQNMLPPRYSPGYTSDVSHLVV</sequence>
<reference evidence="8" key="1">
    <citation type="journal article" date="2007" name="Nature">
        <title>Evolution of genes and genomes on the Drosophila phylogeny.</title>
        <authorList>
            <consortium name="Drosophila 12 genomes consortium"/>
        </authorList>
    </citation>
    <scope>NUCLEOTIDE SEQUENCE [LARGE SCALE GENOMIC DNA]</scope>
    <source>
        <strain evidence="8">Tucson 14024-0371.13</strain>
    </source>
</reference>
<feature type="signal peptide" evidence="5">
    <location>
        <begin position="1"/>
        <end position="23"/>
    </location>
</feature>
<feature type="chain" id="PRO_0000363993" description="Glutamate [NMDA] receptor subunit 1" evidence="5">
    <location>
        <begin position="24"/>
        <end position="994"/>
    </location>
</feature>
<feature type="topological domain" description="Extracellular" evidence="5">
    <location>
        <begin position="24"/>
        <end position="570"/>
    </location>
</feature>
<feature type="transmembrane region" description="Helical" evidence="5">
    <location>
        <begin position="571"/>
        <end position="591"/>
    </location>
</feature>
<feature type="topological domain" description="Cytoplasmic" evidence="5">
    <location>
        <begin position="592"/>
        <end position="648"/>
    </location>
</feature>
<feature type="transmembrane region" description="Helical" evidence="5">
    <location>
        <begin position="649"/>
        <end position="669"/>
    </location>
</feature>
<feature type="topological domain" description="Extracellular" evidence="5">
    <location>
        <begin position="670"/>
        <end position="828"/>
    </location>
</feature>
<feature type="transmembrane region" description="Helical" evidence="5">
    <location>
        <begin position="829"/>
        <end position="849"/>
    </location>
</feature>
<feature type="topological domain" description="Cytoplasmic" evidence="5">
    <location>
        <begin position="850"/>
        <end position="994"/>
    </location>
</feature>
<feature type="region of interest" description="Disordered" evidence="6">
    <location>
        <begin position="971"/>
        <end position="994"/>
    </location>
</feature>
<feature type="compositionally biased region" description="Polar residues" evidence="6">
    <location>
        <begin position="984"/>
        <end position="994"/>
    </location>
</feature>
<feature type="binding site" evidence="2">
    <location>
        <begin position="527"/>
        <end position="529"/>
    </location>
    <ligand>
        <name>glycine</name>
        <dbReference type="ChEBI" id="CHEBI:57305"/>
    </ligand>
</feature>
<feature type="binding site" evidence="2">
    <location>
        <position position="534"/>
    </location>
    <ligand>
        <name>glycine</name>
        <dbReference type="ChEBI" id="CHEBI:57305"/>
    </ligand>
</feature>
<feature type="binding site" evidence="2">
    <location>
        <position position="700"/>
    </location>
    <ligand>
        <name>glycine</name>
        <dbReference type="ChEBI" id="CHEBI:57305"/>
    </ligand>
</feature>
<feature type="binding site" evidence="2">
    <location>
        <position position="744"/>
    </location>
    <ligand>
        <name>glycine</name>
        <dbReference type="ChEBI" id="CHEBI:57305"/>
    </ligand>
</feature>
<feature type="glycosylation site" description="N-linked (GlcNAc...) asparagine" evidence="5">
    <location>
        <position position="255"/>
    </location>
</feature>
<feature type="glycosylation site" description="N-linked (GlcNAc...) asparagine" evidence="5">
    <location>
        <position position="311"/>
    </location>
</feature>
<feature type="glycosylation site" description="N-linked (GlcNAc...) asparagine" evidence="5">
    <location>
        <position position="342"/>
    </location>
</feature>
<feature type="glycosylation site" description="N-linked (GlcNAc...) asparagine" evidence="5">
    <location>
        <position position="394"/>
    </location>
</feature>
<feature type="glycosylation site" description="N-linked (GlcNAc...) asparagine" evidence="5">
    <location>
        <position position="451"/>
    </location>
</feature>
<feature type="glycosylation site" description="N-linked (GlcNAc...) asparagine" evidence="5">
    <location>
        <position position="478"/>
    </location>
</feature>
<feature type="glycosylation site" description="N-linked (GlcNAc...) asparagine" evidence="5">
    <location>
        <position position="498"/>
    </location>
</feature>
<feature type="glycosylation site" description="N-linked (GlcNAc...) asparagine" evidence="5">
    <location>
        <position position="690"/>
    </location>
</feature>
<feature type="disulfide bond" description="Interchain" evidence="3">
    <location>
        <position position="90"/>
    </location>
</feature>
<dbReference type="EMBL" id="CH902617">
    <property type="protein sequence ID" value="EDV41913.1"/>
    <property type="molecule type" value="Genomic_DNA"/>
</dbReference>
<dbReference type="RefSeq" id="XP_001953330.2">
    <property type="nucleotide sequence ID" value="XM_001953295.2"/>
</dbReference>
<dbReference type="RefSeq" id="XP_014766582.1">
    <property type="nucleotide sequence ID" value="XM_014911096.1"/>
</dbReference>
<dbReference type="SMR" id="B3LZ39"/>
<dbReference type="FunCoup" id="B3LZ39">
    <property type="interactions" value="377"/>
</dbReference>
<dbReference type="STRING" id="7217.B3LZ39"/>
<dbReference type="GlyCosmos" id="B3LZ39">
    <property type="glycosylation" value="8 sites, No reported glycans"/>
</dbReference>
<dbReference type="EnsemblMetazoa" id="FBtr0383096">
    <property type="protein sequence ID" value="FBpp0343260"/>
    <property type="gene ID" value="FBgn0094722"/>
</dbReference>
<dbReference type="GeneID" id="6500487"/>
<dbReference type="KEGG" id="dan:6500487"/>
<dbReference type="CTD" id="40665"/>
<dbReference type="eggNOG" id="KOG4440">
    <property type="taxonomic scope" value="Eukaryota"/>
</dbReference>
<dbReference type="HOGENOM" id="CLU_007257_2_0_1"/>
<dbReference type="InParanoid" id="B3LZ39"/>
<dbReference type="OMA" id="FANNTPD"/>
<dbReference type="OrthoDB" id="5984008at2759"/>
<dbReference type="PhylomeDB" id="B3LZ39"/>
<dbReference type="Proteomes" id="UP000007801">
    <property type="component" value="Unassembled WGS sequence"/>
</dbReference>
<dbReference type="GO" id="GO:0017146">
    <property type="term" value="C:NMDA selective glutamate receptor complex"/>
    <property type="evidence" value="ECO:0000250"/>
    <property type="project" value="UniProtKB"/>
</dbReference>
<dbReference type="GO" id="GO:0014069">
    <property type="term" value="C:postsynaptic density"/>
    <property type="evidence" value="ECO:0007669"/>
    <property type="project" value="UniProtKB-SubCell"/>
</dbReference>
<dbReference type="GO" id="GO:0045211">
    <property type="term" value="C:postsynaptic membrane"/>
    <property type="evidence" value="ECO:0000250"/>
    <property type="project" value="UniProtKB"/>
</dbReference>
<dbReference type="GO" id="GO:0004970">
    <property type="term" value="F:glutamate-gated receptor activity"/>
    <property type="evidence" value="ECO:0000250"/>
    <property type="project" value="UniProtKB"/>
</dbReference>
<dbReference type="GO" id="GO:0055074">
    <property type="term" value="P:calcium ion homeostasis"/>
    <property type="evidence" value="ECO:0000250"/>
    <property type="project" value="UniProtKB"/>
</dbReference>
<dbReference type="GO" id="GO:0007268">
    <property type="term" value="P:chemical synaptic transmission"/>
    <property type="evidence" value="ECO:0000250"/>
    <property type="project" value="UniProtKB"/>
</dbReference>
<dbReference type="GO" id="GO:0035235">
    <property type="term" value="P:ionotropic glutamate receptor signaling pathway"/>
    <property type="evidence" value="ECO:0000250"/>
    <property type="project" value="UniProtKB"/>
</dbReference>
<dbReference type="GO" id="GO:0007616">
    <property type="term" value="P:long-term memory"/>
    <property type="evidence" value="ECO:0000250"/>
    <property type="project" value="UniProtKB"/>
</dbReference>
<dbReference type="GO" id="GO:0008355">
    <property type="term" value="P:olfactory learning"/>
    <property type="evidence" value="ECO:0000250"/>
    <property type="project" value="UniProtKB"/>
</dbReference>
<dbReference type="GO" id="GO:0042391">
    <property type="term" value="P:regulation of membrane potential"/>
    <property type="evidence" value="ECO:0000250"/>
    <property type="project" value="UniProtKB"/>
</dbReference>
<dbReference type="CDD" id="cd06379">
    <property type="entry name" value="PBP1_iGluR_NMDA_NR1"/>
    <property type="match status" value="1"/>
</dbReference>
<dbReference type="CDD" id="cd13719">
    <property type="entry name" value="PBP2_iGluR_NMDA_Nr1"/>
    <property type="match status" value="1"/>
</dbReference>
<dbReference type="FunFam" id="3.40.190.10:FF:000177">
    <property type="entry name" value="Glutamate [NMDA] receptor subunit 1"/>
    <property type="match status" value="1"/>
</dbReference>
<dbReference type="FunFam" id="3.40.50.2300:FF:000266">
    <property type="entry name" value="Glutamate [NMDA] receptor subunit 1"/>
    <property type="match status" value="1"/>
</dbReference>
<dbReference type="FunFam" id="3.40.190.10:FF:000010">
    <property type="entry name" value="glutamate receptor ionotropic, NMDA 1 isoform X1"/>
    <property type="match status" value="1"/>
</dbReference>
<dbReference type="FunFam" id="3.40.50.2300:FF:000025">
    <property type="entry name" value="glutamate receptor ionotropic, NMDA 1 isoform X1"/>
    <property type="match status" value="1"/>
</dbReference>
<dbReference type="Gene3D" id="1.10.287.70">
    <property type="match status" value="1"/>
</dbReference>
<dbReference type="Gene3D" id="3.40.50.2300">
    <property type="match status" value="2"/>
</dbReference>
<dbReference type="Gene3D" id="3.40.190.10">
    <property type="entry name" value="Periplasmic binding protein-like II"/>
    <property type="match status" value="2"/>
</dbReference>
<dbReference type="InterPro" id="IPR001828">
    <property type="entry name" value="ANF_lig-bd_rcpt"/>
</dbReference>
<dbReference type="InterPro" id="IPR018882">
    <property type="entry name" value="CaM-bd_C0_NMDA_rcpt_NR1"/>
</dbReference>
<dbReference type="InterPro" id="IPR019594">
    <property type="entry name" value="Glu/Gly-bd"/>
</dbReference>
<dbReference type="InterPro" id="IPR001508">
    <property type="entry name" value="Iono_Glu_rcpt_met"/>
</dbReference>
<dbReference type="InterPro" id="IPR015683">
    <property type="entry name" value="Ionotropic_Glu_rcpt"/>
</dbReference>
<dbReference type="InterPro" id="IPR001320">
    <property type="entry name" value="Iontro_rcpt_C"/>
</dbReference>
<dbReference type="InterPro" id="IPR049872">
    <property type="entry name" value="NMDA1-like_ligand-bd"/>
</dbReference>
<dbReference type="InterPro" id="IPR049873">
    <property type="entry name" value="NMDA1-like_N"/>
</dbReference>
<dbReference type="InterPro" id="IPR028082">
    <property type="entry name" value="Peripla_BP_I"/>
</dbReference>
<dbReference type="PANTHER" id="PTHR18966">
    <property type="entry name" value="IONOTROPIC GLUTAMATE RECEPTOR"/>
    <property type="match status" value="1"/>
</dbReference>
<dbReference type="Pfam" id="PF01094">
    <property type="entry name" value="ANF_receptor"/>
    <property type="match status" value="1"/>
</dbReference>
<dbReference type="Pfam" id="PF10562">
    <property type="entry name" value="CaM_bdg_C0"/>
    <property type="match status" value="1"/>
</dbReference>
<dbReference type="Pfam" id="PF00060">
    <property type="entry name" value="Lig_chan"/>
    <property type="match status" value="1"/>
</dbReference>
<dbReference type="Pfam" id="PF10613">
    <property type="entry name" value="Lig_chan-Glu_bd"/>
    <property type="match status" value="1"/>
</dbReference>
<dbReference type="PRINTS" id="PR00177">
    <property type="entry name" value="NMDARECEPTOR"/>
</dbReference>
<dbReference type="SMART" id="SM00918">
    <property type="entry name" value="Lig_chan-Glu_bd"/>
    <property type="match status" value="1"/>
</dbReference>
<dbReference type="SMART" id="SM00079">
    <property type="entry name" value="PBPe"/>
    <property type="match status" value="1"/>
</dbReference>
<dbReference type="SUPFAM" id="SSF53822">
    <property type="entry name" value="Periplasmic binding protein-like I"/>
    <property type="match status" value="1"/>
</dbReference>
<dbReference type="SUPFAM" id="SSF53850">
    <property type="entry name" value="Periplasmic binding protein-like II"/>
    <property type="match status" value="1"/>
</dbReference>
<dbReference type="SUPFAM" id="SSF81324">
    <property type="entry name" value="Voltage-gated potassium channels"/>
    <property type="match status" value="1"/>
</dbReference>
<organism>
    <name type="scientific">Drosophila ananassae</name>
    <name type="common">Fruit fly</name>
    <dbReference type="NCBI Taxonomy" id="7217"/>
    <lineage>
        <taxon>Eukaryota</taxon>
        <taxon>Metazoa</taxon>
        <taxon>Ecdysozoa</taxon>
        <taxon>Arthropoda</taxon>
        <taxon>Hexapoda</taxon>
        <taxon>Insecta</taxon>
        <taxon>Pterygota</taxon>
        <taxon>Neoptera</taxon>
        <taxon>Endopterygota</taxon>
        <taxon>Diptera</taxon>
        <taxon>Brachycera</taxon>
        <taxon>Muscomorpha</taxon>
        <taxon>Ephydroidea</taxon>
        <taxon>Drosophilidae</taxon>
        <taxon>Drosophila</taxon>
        <taxon>Sophophora</taxon>
    </lineage>
</organism>
<protein>
    <recommendedName>
        <fullName evidence="4">Glutamate [NMDA] receptor subunit 1</fullName>
    </recommendedName>
</protein>